<sequence>MAPAASKLRAEAGLGPLPRRALSQYLRLLRLYPVLTKAATSGILSALGNFLAQLIEKKQKKENCSQKLDVSGPLRYAIYGFFFTGPLGHFFYLLMERWIPSEVPLAGIKRLLLDRLLFAPAFLSLFFLVMNFLEGQDTAAFAAKMKSGFWPALRMNWRVWTPVQFININYIPVQFRVLFANLVALFWYAYLASLGK</sequence>
<keyword id="KW-0472">Membrane</keyword>
<keyword id="KW-0576">Peroxisome</keyword>
<keyword id="KW-1185">Reference proteome</keyword>
<keyword id="KW-0812">Transmembrane</keyword>
<keyword id="KW-1133">Transmembrane helix</keyword>
<name>PXMP2_BOVIN</name>
<feature type="chain" id="PRO_0000245253" description="Peroxisomal membrane protein 2">
    <location>
        <begin position="1"/>
        <end position="196"/>
    </location>
</feature>
<feature type="topological domain" description="Cytoplasmic" evidence="2">
    <location>
        <begin position="1"/>
        <end position="30"/>
    </location>
</feature>
<feature type="transmembrane region" description="Helical" evidence="2">
    <location>
        <begin position="31"/>
        <end position="51"/>
    </location>
</feature>
<feature type="topological domain" description="Peroxisomal" evidence="2">
    <location>
        <begin position="52"/>
        <end position="76"/>
    </location>
</feature>
<feature type="transmembrane region" description="Helical" evidence="2">
    <location>
        <begin position="77"/>
        <end position="97"/>
    </location>
</feature>
<feature type="topological domain" description="Cytoplasmic" evidence="2">
    <location>
        <begin position="98"/>
        <end position="115"/>
    </location>
</feature>
<feature type="transmembrane region" description="Helical" evidence="2">
    <location>
        <begin position="116"/>
        <end position="136"/>
    </location>
</feature>
<feature type="topological domain" description="Peroxisomal" evidence="2">
    <location>
        <begin position="137"/>
        <end position="174"/>
    </location>
</feature>
<feature type="transmembrane region" description="Helical" evidence="2">
    <location>
        <begin position="175"/>
        <end position="196"/>
    </location>
</feature>
<organism>
    <name type="scientific">Bos taurus</name>
    <name type="common">Bovine</name>
    <dbReference type="NCBI Taxonomy" id="9913"/>
    <lineage>
        <taxon>Eukaryota</taxon>
        <taxon>Metazoa</taxon>
        <taxon>Chordata</taxon>
        <taxon>Craniata</taxon>
        <taxon>Vertebrata</taxon>
        <taxon>Euteleostomi</taxon>
        <taxon>Mammalia</taxon>
        <taxon>Eutheria</taxon>
        <taxon>Laurasiatheria</taxon>
        <taxon>Artiodactyla</taxon>
        <taxon>Ruminantia</taxon>
        <taxon>Pecora</taxon>
        <taxon>Bovidae</taxon>
        <taxon>Bovinae</taxon>
        <taxon>Bos</taxon>
    </lineage>
</organism>
<reference key="1">
    <citation type="submission" date="2006-01" db="EMBL/GenBank/DDBJ databases">
        <authorList>
            <consortium name="NIH - Mammalian Gene Collection (MGC) project"/>
        </authorList>
    </citation>
    <scope>NUCLEOTIDE SEQUENCE [LARGE SCALE MRNA]</scope>
    <source>
        <strain>Hereford</strain>
        <tissue>Testis</tissue>
    </source>
</reference>
<dbReference type="EMBL" id="BC112465">
    <property type="protein sequence ID" value="AAI12466.1"/>
    <property type="molecule type" value="mRNA"/>
</dbReference>
<dbReference type="RefSeq" id="NP_001039473.1">
    <property type="nucleotide sequence ID" value="NM_001046008.2"/>
</dbReference>
<dbReference type="FunCoup" id="Q2KIY1">
    <property type="interactions" value="361"/>
</dbReference>
<dbReference type="STRING" id="9913.ENSBTAP00000009885"/>
<dbReference type="PaxDb" id="9913-ENSBTAP00000009885"/>
<dbReference type="GeneID" id="508609"/>
<dbReference type="KEGG" id="bta:508609"/>
<dbReference type="CTD" id="5827"/>
<dbReference type="eggNOG" id="KOG1944">
    <property type="taxonomic scope" value="Eukaryota"/>
</dbReference>
<dbReference type="HOGENOM" id="CLU_049109_7_1_1"/>
<dbReference type="InParanoid" id="Q2KIY1"/>
<dbReference type="OrthoDB" id="860at2759"/>
<dbReference type="TreeFam" id="TF105311"/>
<dbReference type="Proteomes" id="UP000009136">
    <property type="component" value="Unplaced"/>
</dbReference>
<dbReference type="GO" id="GO:0005737">
    <property type="term" value="C:cytoplasm"/>
    <property type="evidence" value="ECO:0000318"/>
    <property type="project" value="GO_Central"/>
</dbReference>
<dbReference type="GO" id="GO:0005778">
    <property type="term" value="C:peroxisomal membrane"/>
    <property type="evidence" value="ECO:0000318"/>
    <property type="project" value="GO_Central"/>
</dbReference>
<dbReference type="InterPro" id="IPR007248">
    <property type="entry name" value="Mpv17_PMP22"/>
</dbReference>
<dbReference type="PANTHER" id="PTHR11266:SF80">
    <property type="entry name" value="PEROXISOMAL MEMBRANE PROTEIN 2"/>
    <property type="match status" value="1"/>
</dbReference>
<dbReference type="PANTHER" id="PTHR11266">
    <property type="entry name" value="PEROXISOMAL MEMBRANE PROTEIN 2, PXMP2 MPV17"/>
    <property type="match status" value="1"/>
</dbReference>
<dbReference type="Pfam" id="PF04117">
    <property type="entry name" value="Mpv17_PMP22"/>
    <property type="match status" value="1"/>
</dbReference>
<accession>Q2KIY1</accession>
<evidence type="ECO:0000250" key="1"/>
<evidence type="ECO:0000255" key="2"/>
<evidence type="ECO:0000305" key="3"/>
<comment type="function">
    <text evidence="1">Seems to be involved in pore-forming activity and may contribute to the unspecific permeability of the peroxisomal membrane.</text>
</comment>
<comment type="subunit">
    <text evidence="1">Interacts with PEX19 and SIVA1.</text>
</comment>
<comment type="subcellular location">
    <subcellularLocation>
        <location evidence="1">Peroxisome membrane</location>
        <topology evidence="1">Multi-pass membrane protein</topology>
    </subcellularLocation>
</comment>
<comment type="similarity">
    <text evidence="3">Belongs to the peroxisomal membrane protein PXMP2/4 family.</text>
</comment>
<proteinExistence type="evidence at transcript level"/>
<protein>
    <recommendedName>
        <fullName>Peroxisomal membrane protein 2</fullName>
    </recommendedName>
</protein>
<gene>
    <name type="primary">PXMP2</name>
</gene>